<gene>
    <name evidence="1" type="primary">dut</name>
    <name type="ordered locus">Acry_1726</name>
</gene>
<keyword id="KW-0378">Hydrolase</keyword>
<keyword id="KW-0460">Magnesium</keyword>
<keyword id="KW-0479">Metal-binding</keyword>
<keyword id="KW-0546">Nucleotide metabolism</keyword>
<keyword id="KW-1185">Reference proteome</keyword>
<accession>A5FZ98</accession>
<organism>
    <name type="scientific">Acidiphilium cryptum (strain JF-5)</name>
    <dbReference type="NCBI Taxonomy" id="349163"/>
    <lineage>
        <taxon>Bacteria</taxon>
        <taxon>Pseudomonadati</taxon>
        <taxon>Pseudomonadota</taxon>
        <taxon>Alphaproteobacteria</taxon>
        <taxon>Acetobacterales</taxon>
        <taxon>Acidocellaceae</taxon>
        <taxon>Acidiphilium</taxon>
    </lineage>
</organism>
<dbReference type="EC" id="3.6.1.23" evidence="1"/>
<dbReference type="EMBL" id="CP000697">
    <property type="protein sequence ID" value="ABQ30930.1"/>
    <property type="molecule type" value="Genomic_DNA"/>
</dbReference>
<dbReference type="RefSeq" id="WP_007423662.1">
    <property type="nucleotide sequence ID" value="NC_009484.1"/>
</dbReference>
<dbReference type="SMR" id="A5FZ98"/>
<dbReference type="STRING" id="349163.Acry_1726"/>
<dbReference type="KEGG" id="acr:Acry_1726"/>
<dbReference type="eggNOG" id="COG0756">
    <property type="taxonomic scope" value="Bacteria"/>
</dbReference>
<dbReference type="HOGENOM" id="CLU_068508_1_2_5"/>
<dbReference type="UniPathway" id="UPA00610">
    <property type="reaction ID" value="UER00666"/>
</dbReference>
<dbReference type="Proteomes" id="UP000000245">
    <property type="component" value="Chromosome"/>
</dbReference>
<dbReference type="GO" id="GO:0004170">
    <property type="term" value="F:dUTP diphosphatase activity"/>
    <property type="evidence" value="ECO:0007669"/>
    <property type="project" value="UniProtKB-UniRule"/>
</dbReference>
<dbReference type="GO" id="GO:0000287">
    <property type="term" value="F:magnesium ion binding"/>
    <property type="evidence" value="ECO:0007669"/>
    <property type="project" value="UniProtKB-UniRule"/>
</dbReference>
<dbReference type="GO" id="GO:0006226">
    <property type="term" value="P:dUMP biosynthetic process"/>
    <property type="evidence" value="ECO:0007669"/>
    <property type="project" value="UniProtKB-UniRule"/>
</dbReference>
<dbReference type="GO" id="GO:0046081">
    <property type="term" value="P:dUTP catabolic process"/>
    <property type="evidence" value="ECO:0007669"/>
    <property type="project" value="InterPro"/>
</dbReference>
<dbReference type="CDD" id="cd07557">
    <property type="entry name" value="trimeric_dUTPase"/>
    <property type="match status" value="1"/>
</dbReference>
<dbReference type="FunFam" id="2.70.40.10:FF:000002">
    <property type="entry name" value="dUTP diphosphatase"/>
    <property type="match status" value="1"/>
</dbReference>
<dbReference type="Gene3D" id="2.70.40.10">
    <property type="match status" value="1"/>
</dbReference>
<dbReference type="HAMAP" id="MF_00116">
    <property type="entry name" value="dUTPase_bact"/>
    <property type="match status" value="1"/>
</dbReference>
<dbReference type="InterPro" id="IPR008181">
    <property type="entry name" value="dUTPase"/>
</dbReference>
<dbReference type="InterPro" id="IPR029054">
    <property type="entry name" value="dUTPase-like"/>
</dbReference>
<dbReference type="InterPro" id="IPR036157">
    <property type="entry name" value="dUTPase-like_sf"/>
</dbReference>
<dbReference type="InterPro" id="IPR033704">
    <property type="entry name" value="dUTPase_trimeric"/>
</dbReference>
<dbReference type="NCBIfam" id="TIGR00576">
    <property type="entry name" value="dut"/>
    <property type="match status" value="1"/>
</dbReference>
<dbReference type="NCBIfam" id="NF001862">
    <property type="entry name" value="PRK00601.1"/>
    <property type="match status" value="1"/>
</dbReference>
<dbReference type="PANTHER" id="PTHR11241">
    <property type="entry name" value="DEOXYURIDINE 5'-TRIPHOSPHATE NUCLEOTIDOHYDROLASE"/>
    <property type="match status" value="1"/>
</dbReference>
<dbReference type="PANTHER" id="PTHR11241:SF0">
    <property type="entry name" value="DEOXYURIDINE 5'-TRIPHOSPHATE NUCLEOTIDOHYDROLASE"/>
    <property type="match status" value="1"/>
</dbReference>
<dbReference type="Pfam" id="PF00692">
    <property type="entry name" value="dUTPase"/>
    <property type="match status" value="1"/>
</dbReference>
<dbReference type="SUPFAM" id="SSF51283">
    <property type="entry name" value="dUTPase-like"/>
    <property type="match status" value="1"/>
</dbReference>
<feature type="chain" id="PRO_1000057763" description="Deoxyuridine 5'-triphosphate nucleotidohydrolase">
    <location>
        <begin position="1"/>
        <end position="154"/>
    </location>
</feature>
<feature type="binding site" evidence="1">
    <location>
        <begin position="68"/>
        <end position="70"/>
    </location>
    <ligand>
        <name>substrate</name>
    </ligand>
</feature>
<feature type="binding site" evidence="1">
    <location>
        <position position="81"/>
    </location>
    <ligand>
        <name>substrate</name>
    </ligand>
</feature>
<feature type="binding site" evidence="1">
    <location>
        <begin position="85"/>
        <end position="87"/>
    </location>
    <ligand>
        <name>substrate</name>
    </ligand>
</feature>
<evidence type="ECO:0000255" key="1">
    <source>
        <dbReference type="HAMAP-Rule" id="MF_00116"/>
    </source>
</evidence>
<reference key="1">
    <citation type="submission" date="2007-05" db="EMBL/GenBank/DDBJ databases">
        <title>Complete sequence of chromosome of Acidiphilium cryptum JF-5.</title>
        <authorList>
            <consortium name="US DOE Joint Genome Institute"/>
            <person name="Copeland A."/>
            <person name="Lucas S."/>
            <person name="Lapidus A."/>
            <person name="Barry K."/>
            <person name="Detter J.C."/>
            <person name="Glavina del Rio T."/>
            <person name="Hammon N."/>
            <person name="Israni S."/>
            <person name="Dalin E."/>
            <person name="Tice H."/>
            <person name="Pitluck S."/>
            <person name="Sims D."/>
            <person name="Brettin T."/>
            <person name="Bruce D."/>
            <person name="Han C."/>
            <person name="Schmutz J."/>
            <person name="Larimer F."/>
            <person name="Land M."/>
            <person name="Hauser L."/>
            <person name="Kyrpides N."/>
            <person name="Kim E."/>
            <person name="Magnuson T."/>
            <person name="Richardson P."/>
        </authorList>
    </citation>
    <scope>NUCLEOTIDE SEQUENCE [LARGE SCALE GENOMIC DNA]</scope>
    <source>
        <strain>JF-5</strain>
    </source>
</reference>
<comment type="function">
    <text evidence="1">This enzyme is involved in nucleotide metabolism: it produces dUMP, the immediate precursor of thymidine nucleotides and it decreases the intracellular concentration of dUTP so that uracil cannot be incorporated into DNA.</text>
</comment>
<comment type="catalytic activity">
    <reaction evidence="1">
        <text>dUTP + H2O = dUMP + diphosphate + H(+)</text>
        <dbReference type="Rhea" id="RHEA:10248"/>
        <dbReference type="ChEBI" id="CHEBI:15377"/>
        <dbReference type="ChEBI" id="CHEBI:15378"/>
        <dbReference type="ChEBI" id="CHEBI:33019"/>
        <dbReference type="ChEBI" id="CHEBI:61555"/>
        <dbReference type="ChEBI" id="CHEBI:246422"/>
        <dbReference type="EC" id="3.6.1.23"/>
    </reaction>
</comment>
<comment type="cofactor">
    <cofactor evidence="1">
        <name>Mg(2+)</name>
        <dbReference type="ChEBI" id="CHEBI:18420"/>
    </cofactor>
</comment>
<comment type="pathway">
    <text evidence="1">Pyrimidine metabolism; dUMP biosynthesis; dUMP from dCTP (dUTP route): step 2/2.</text>
</comment>
<comment type="similarity">
    <text evidence="1">Belongs to the dUTPase family.</text>
</comment>
<protein>
    <recommendedName>
        <fullName evidence="1">Deoxyuridine 5'-triphosphate nucleotidohydrolase</fullName>
        <shortName evidence="1">dUTPase</shortName>
        <ecNumber evidence="1">3.6.1.23</ecNumber>
    </recommendedName>
    <alternativeName>
        <fullName evidence="1">dUTP pyrophosphatase</fullName>
    </alternativeName>
</protein>
<proteinExistence type="inferred from homology"/>
<name>DUT_ACICJ</name>
<sequence>MTIAVAVKRLAHGAGLPLPDYATAGSAGLDLLAAVDAPVVIAPGARALVPTGLAIALPPDFELQVRPRSGLALKHGIVIPNSPGTIDSDYRGEIQVIVLNAGTEAFEVTRGMRIAQAVLAPVSRLVWQETDDLDRTAREAGGFGSTGLDFPMGN</sequence>